<accession>Q5V467</accession>
<name>GMSS1_HALMA</name>
<protein>
    <recommendedName>
        <fullName evidence="1">Glutamate mutase sigma subunit 1</fullName>
        <ecNumber evidence="1">5.4.99.1</ecNumber>
    </recommendedName>
    <alternativeName>
        <fullName evidence="1">Glutamate mutase S chain 1</fullName>
    </alternativeName>
    <alternativeName>
        <fullName evidence="1">Glutamate mutase small subunit 1</fullName>
    </alternativeName>
    <alternativeName>
        <fullName evidence="1">Methylaspartate mutase 1</fullName>
    </alternativeName>
</protein>
<organism>
    <name type="scientific">Haloarcula marismortui (strain ATCC 43049 / DSM 3752 / JCM 8966 / VKM B-1809)</name>
    <name type="common">Halobacterium marismortui</name>
    <dbReference type="NCBI Taxonomy" id="272569"/>
    <lineage>
        <taxon>Archaea</taxon>
        <taxon>Methanobacteriati</taxon>
        <taxon>Methanobacteriota</taxon>
        <taxon>Stenosarchaea group</taxon>
        <taxon>Halobacteria</taxon>
        <taxon>Halobacteriales</taxon>
        <taxon>Haloarculaceae</taxon>
        <taxon>Haloarcula</taxon>
    </lineage>
</organism>
<comment type="function">
    <text evidence="2">Catalyzes the carbon skeleton rearrangement of L-glutamate to L-threo-3-methylaspartate ((2S,3S)-3-methylaspartate).</text>
</comment>
<comment type="catalytic activity">
    <reaction evidence="1">
        <text>(2S,3S)-3-methyl-L-aspartate = L-glutamate</text>
        <dbReference type="Rhea" id="RHEA:12857"/>
        <dbReference type="ChEBI" id="CHEBI:29985"/>
        <dbReference type="ChEBI" id="CHEBI:58724"/>
        <dbReference type="EC" id="5.4.99.1"/>
    </reaction>
</comment>
<comment type="cofactor">
    <cofactor evidence="1">
        <name>adenosylcob(III)alamin</name>
        <dbReference type="ChEBI" id="CHEBI:18408"/>
    </cofactor>
</comment>
<comment type="pathway">
    <text evidence="1">Amino-acid degradation; L-glutamate degradation via mesaconate pathway; acetate and pyruvate from L-glutamate: step 1/4.</text>
</comment>
<comment type="subunit">
    <text evidence="1">Heterotetramer composed of 2 epsilon subunits (GlmE) and 2 sigma subunits (GlmS). GlmE exists as a homodimer and GlmS as a monomer.</text>
</comment>
<comment type="similarity">
    <text evidence="1">Belongs to the methylaspartate mutase GlmS subunit family.</text>
</comment>
<proteinExistence type="inferred from homology"/>
<feature type="chain" id="PRO_0000278195" description="Glutamate mutase sigma subunit 1">
    <location>
        <begin position="1"/>
        <end position="151"/>
    </location>
</feature>
<feature type="domain" description="B12-binding" evidence="1">
    <location>
        <begin position="7"/>
        <end position="140"/>
    </location>
</feature>
<feature type="binding site" evidence="1">
    <location>
        <begin position="17"/>
        <end position="21"/>
    </location>
    <ligand>
        <name>adenosylcob(III)alamin</name>
        <dbReference type="ChEBI" id="CHEBI:18408"/>
    </ligand>
</feature>
<feature type="binding site" description="axial binding residue" evidence="1">
    <location>
        <position position="20"/>
    </location>
    <ligand>
        <name>adenosylcob(III)alamin</name>
        <dbReference type="ChEBI" id="CHEBI:18408"/>
    </ligand>
    <ligandPart>
        <name>Co</name>
        <dbReference type="ChEBI" id="CHEBI:27638"/>
    </ligandPart>
</feature>
<feature type="binding site" evidence="1">
    <location>
        <begin position="65"/>
        <end position="67"/>
    </location>
    <ligand>
        <name>adenosylcob(III)alamin</name>
        <dbReference type="ChEBI" id="CHEBI:18408"/>
    </ligand>
</feature>
<feature type="binding site" evidence="1">
    <location>
        <begin position="96"/>
        <end position="100"/>
    </location>
    <ligand>
        <name>adenosylcob(III)alamin</name>
        <dbReference type="ChEBI" id="CHEBI:18408"/>
    </ligand>
</feature>
<reference key="1">
    <citation type="journal article" date="2004" name="Genome Res.">
        <title>Genome sequence of Haloarcula marismortui: a halophilic archaeon from the Dead Sea.</title>
        <authorList>
            <person name="Baliga N.S."/>
            <person name="Bonneau R."/>
            <person name="Facciotti M.T."/>
            <person name="Pan M."/>
            <person name="Glusman G."/>
            <person name="Deutsch E.W."/>
            <person name="Shannon P."/>
            <person name="Chiu Y."/>
            <person name="Weng R.S."/>
            <person name="Gan R.R."/>
            <person name="Hung P."/>
            <person name="Date S.V."/>
            <person name="Marcotte E."/>
            <person name="Hood L."/>
            <person name="Ng W.V."/>
        </authorList>
    </citation>
    <scope>NUCLEOTIDE SEQUENCE [LARGE SCALE GENOMIC DNA]</scope>
    <source>
        <strain>ATCC 43049 / DSM 3752 / JCM 8966 / VKM B-1809</strain>
    </source>
</reference>
<reference key="2">
    <citation type="journal article" date="2011" name="Science">
        <title>A methylaspartate cycle in haloarchaea.</title>
        <authorList>
            <person name="Khomyakova M."/>
            <person name="Bukmez O."/>
            <person name="Thomas L.K."/>
            <person name="Erb T.J."/>
            <person name="Berg I.A."/>
        </authorList>
    </citation>
    <scope>FUNCTION</scope>
    <source>
        <strain>ATCC 43049 / DSM 3752 / JCM 8966 / VKM B-1809</strain>
    </source>
</reference>
<sequence length="151" mass="16306">MTGKYMPRTVILGVIGSDAHVVGITILEQALSAAGFEVINLGVQTAQDEFVSAAKSHDAEAVLVSSLYGHARQDCEGLHDELDDAGLDVLTYVGGNLAVGQSDFEETQATFRQMGFDRVFDAETDPEEAIEMLREDLQLTTTEAEQIRVDG</sequence>
<evidence type="ECO:0000255" key="1">
    <source>
        <dbReference type="HAMAP-Rule" id="MF_00526"/>
    </source>
</evidence>
<evidence type="ECO:0000305" key="2">
    <source>
    </source>
</evidence>
<dbReference type="EC" id="5.4.99.1" evidence="1"/>
<dbReference type="EMBL" id="AY596297">
    <property type="protein sequence ID" value="AAV45685.1"/>
    <property type="molecule type" value="Genomic_DNA"/>
</dbReference>
<dbReference type="SMR" id="Q5V467"/>
<dbReference type="STRING" id="272569.rrnAC0684"/>
<dbReference type="PaxDb" id="272569-rrnAC0684"/>
<dbReference type="EnsemblBacteria" id="AAV45685">
    <property type="protein sequence ID" value="AAV45685"/>
    <property type="gene ID" value="rrnAC0684"/>
</dbReference>
<dbReference type="KEGG" id="hma:rrnAC0684"/>
<dbReference type="PATRIC" id="fig|272569.17.peg.1434"/>
<dbReference type="eggNOG" id="arCOG01710">
    <property type="taxonomic scope" value="Archaea"/>
</dbReference>
<dbReference type="HOGENOM" id="CLU_136705_0_0_2"/>
<dbReference type="BioCyc" id="MetaCyc:MONOMER-16253"/>
<dbReference type="UniPathway" id="UPA00561">
    <property type="reaction ID" value="UER00617"/>
</dbReference>
<dbReference type="Proteomes" id="UP000001169">
    <property type="component" value="Chromosome I"/>
</dbReference>
<dbReference type="GO" id="GO:0031419">
    <property type="term" value="F:cobalamin binding"/>
    <property type="evidence" value="ECO:0007669"/>
    <property type="project" value="UniProtKB-KW"/>
</dbReference>
<dbReference type="GO" id="GO:0046872">
    <property type="term" value="F:metal ion binding"/>
    <property type="evidence" value="ECO:0007669"/>
    <property type="project" value="UniProtKB-KW"/>
</dbReference>
<dbReference type="GO" id="GO:0050097">
    <property type="term" value="F:methylaspartate mutase activity"/>
    <property type="evidence" value="ECO:0007669"/>
    <property type="project" value="UniProtKB-UniRule"/>
</dbReference>
<dbReference type="GO" id="GO:0019670">
    <property type="term" value="P:anaerobic glutamate catabolic process"/>
    <property type="evidence" value="ECO:0007669"/>
    <property type="project" value="InterPro"/>
</dbReference>
<dbReference type="GO" id="GO:0019553">
    <property type="term" value="P:glutamate catabolic process via L-citramalate"/>
    <property type="evidence" value="ECO:0007669"/>
    <property type="project" value="UniProtKB-UniRule"/>
</dbReference>
<dbReference type="CDD" id="cd02072">
    <property type="entry name" value="Glm_B12_BD"/>
    <property type="match status" value="1"/>
</dbReference>
<dbReference type="Gene3D" id="3.40.50.280">
    <property type="entry name" value="Cobalamin-binding domain"/>
    <property type="match status" value="1"/>
</dbReference>
<dbReference type="HAMAP" id="MF_00526">
    <property type="entry name" value="Me_Asp_mutase_S"/>
    <property type="match status" value="1"/>
</dbReference>
<dbReference type="InterPro" id="IPR006158">
    <property type="entry name" value="Cobalamin-bd"/>
</dbReference>
<dbReference type="InterPro" id="IPR036724">
    <property type="entry name" value="Cobalamin-bd_sf"/>
</dbReference>
<dbReference type="InterPro" id="IPR006394">
    <property type="entry name" value="GlmS"/>
</dbReference>
<dbReference type="NCBIfam" id="TIGR01501">
    <property type="entry name" value="MthylAspMutase"/>
    <property type="match status" value="1"/>
</dbReference>
<dbReference type="NCBIfam" id="NF002612">
    <property type="entry name" value="PRK02261.1"/>
    <property type="match status" value="1"/>
</dbReference>
<dbReference type="Pfam" id="PF02310">
    <property type="entry name" value="B12-binding"/>
    <property type="match status" value="1"/>
</dbReference>
<dbReference type="SUPFAM" id="SSF52242">
    <property type="entry name" value="Cobalamin (vitamin B12)-binding domain"/>
    <property type="match status" value="1"/>
</dbReference>
<dbReference type="PROSITE" id="PS51332">
    <property type="entry name" value="B12_BINDING"/>
    <property type="match status" value="1"/>
</dbReference>
<keyword id="KW-0846">Cobalamin</keyword>
<keyword id="KW-0170">Cobalt</keyword>
<keyword id="KW-0413">Isomerase</keyword>
<keyword id="KW-0479">Metal-binding</keyword>
<keyword id="KW-1185">Reference proteome</keyword>
<gene>
    <name evidence="1" type="primary">glmS1</name>
    <name type="synonym">mamA1</name>
    <name type="ordered locus">rrnAC0684</name>
</gene>